<keyword id="KW-0238">DNA-binding</keyword>
<keyword id="KW-0371">Homeobox</keyword>
<keyword id="KW-0539">Nucleus</keyword>
<keyword id="KW-1185">Reference proteome</keyword>
<reference key="1">
    <citation type="journal article" date="2009" name="PLoS Biol.">
        <title>Lineage-specific biology revealed by a finished genome assembly of the mouse.</title>
        <authorList>
            <person name="Church D.M."/>
            <person name="Goodstadt L."/>
            <person name="Hillier L.W."/>
            <person name="Zody M.C."/>
            <person name="Goldstein S."/>
            <person name="She X."/>
            <person name="Bult C.J."/>
            <person name="Agarwala R."/>
            <person name="Cherry J.L."/>
            <person name="DiCuccio M."/>
            <person name="Hlavina W."/>
            <person name="Kapustin Y."/>
            <person name="Meric P."/>
            <person name="Maglott D."/>
            <person name="Birtle Z."/>
            <person name="Marques A.C."/>
            <person name="Graves T."/>
            <person name="Zhou S."/>
            <person name="Teague B."/>
            <person name="Potamousis K."/>
            <person name="Churas C."/>
            <person name="Place M."/>
            <person name="Herschleb J."/>
            <person name="Runnheim R."/>
            <person name="Forrest D."/>
            <person name="Amos-Landgraf J."/>
            <person name="Schwartz D.C."/>
            <person name="Cheng Z."/>
            <person name="Lindblad-Toh K."/>
            <person name="Eichler E.E."/>
            <person name="Ponting C.P."/>
        </authorList>
    </citation>
    <scope>NUCLEOTIDE SEQUENCE [LARGE SCALE GENOMIC DNA]</scope>
    <source>
        <strain>C57BL/6J</strain>
    </source>
</reference>
<reference key="2">
    <citation type="journal article" date="2003" name="Mol. Cell. Biol.">
        <title>Postnatal lethality in mice lacking the Sax2 homeobox gene homologous to Drosophila S59/slouch: evidence for positive and negative autoregulation.</title>
        <authorList>
            <person name="Simon R."/>
            <person name="Lufkin T."/>
        </authorList>
    </citation>
    <scope>DEVELOPMENTAL STAGE</scope>
    <scope>DISRUPTION PHENOTYPE</scope>
    <scope>INDUCTION</scope>
</reference>
<reference key="3">
    <citation type="journal article" date="2007" name="Dev. Dyn.">
        <title>Homeobox gene Sax2 deficiency causes an imbalance in energy homeostasis.</title>
        <authorList>
            <person name="Simon R."/>
            <person name="Lufkin T."/>
            <person name="Bergemann A.D."/>
        </authorList>
    </citation>
    <scope>DISRUPTION PHENOTYPE</scope>
    <scope>FUNCTION</scope>
</reference>
<reference key="4">
    <citation type="journal article" date="2011" name="FEBS J.">
        <title>Ablation of Sax2 gene expression prevents diet-induced obesity.</title>
        <authorList>
            <person name="Simon R."/>
            <person name="Britsch S."/>
            <person name="Bergemann A."/>
        </authorList>
    </citation>
    <scope>FUNCTION</scope>
</reference>
<proteinExistence type="evidence at transcript level"/>
<sequence>MSTSGPAAPGDVPALPPPPPGPGSGPAPPAPAATARDTMDGRAELPIFPRAGVPPLAASDTVPAVPEGAGAARPAAPPRPTSFSVLDILDPNKFNSRRRRCVLLGPVVPATCAPCAPAACVAVPAASGRSPRAELERRALSAATGVAAAAGAEPTSAGDSYRADEAEANGYSSGSGRSPTADSEDEAPEDEDEEEAPEVQDAQGTEEPRGGSGGLGARGSGCPGAAEVEASPVDDTAAPGPRGNSPGAPGPPATATGAGSAGSTPQGAAVTTKPKRKRTGSDSKSGKPRRARTAFTYEQLVALENKFKATRYLSVCERLNLALSLSLTETQVKIWFQNRRTKWKKQNPGADTSAPTGGGGGPGPGAGPGAGLPGGLSPLSPSPPMGAPLALHGPAGYPAHSPGGLVCAAQLPFLSSPAVLSPFVLGSQTYGAPAFYAPHL</sequence>
<gene>
    <name evidence="8" type="primary">Nkx1-1</name>
    <name evidence="6" type="synonym">Sax2</name>
</gene>
<comment type="function">
    <text evidence="4 5">May be required for the coordinated crosstalk of factors involved in the maintenance of energy homeostasis, possibly by regulating the transcription of specific factors involved in energy balance.</text>
</comment>
<comment type="subcellular location">
    <subcellularLocation>
        <location evidence="1">Nucleus</location>
    </subcellularLocation>
</comment>
<comment type="developmental stage">
    <text evidence="3">Detected as early as embryonic stage 10.5 dpc in the ventral mesencephalon, metencephalon, and ventral neural tube and continues to be expressed from this embryonic stage onward, predominantly in the ventral neural tube and the mid/hindbrain boundary region. In the later stages, 12.5 to 16.5 dpc, expression in the brain is detected more specifically in the pons and medulla oblongata.</text>
</comment>
<comment type="induction">
    <text evidence="3">Autoregulated by a negative-feedback mechanism in the ventral midbrain and a positive-feedback mechanism in the midbrain-hindbrain boundary region and the eyes.</text>
</comment>
<comment type="disruption phenotype">
    <text evidence="3 4">Homozygous knockout mice for Sax2 exhibit growth retardation starting immediately after birth and leading to premature death within the first 3 weeks postnatal. Mice do not exhibit any obvious abnormal behavior or motor skills. All mice show normal suckling behavior, but at 2 or 3 days prior to their death, they become lethargic and show signs of wasting. The few homozygous animals surviving to adulthood are fertile, but all the offspring from homozygous intermatings die within 4 days postnatally (PubMed:14645517, PubMed:17879320). At 2 weeks postnatal days, mice lack subcutaneous fat and intra-abdominal epididymal and mesenteric white adipose tissue (WAT) (PubMed:17879320).</text>
</comment>
<comment type="similarity">
    <text evidence="7">Belongs to the NK-1 homeobox family.</text>
</comment>
<feature type="chain" id="PRO_0000452744" description="NK1 transcription factor-related protein 1">
    <location>
        <begin position="1"/>
        <end position="440"/>
    </location>
</feature>
<feature type="DNA-binding region" description="Homeobox" evidence="1">
    <location>
        <begin position="288"/>
        <end position="347"/>
    </location>
</feature>
<feature type="region of interest" description="Disordered" evidence="2">
    <location>
        <begin position="1"/>
        <end position="82"/>
    </location>
</feature>
<feature type="region of interest" description="Disordered" evidence="2">
    <location>
        <begin position="145"/>
        <end position="291"/>
    </location>
</feature>
<feature type="region of interest" description="Disordered" evidence="2">
    <location>
        <begin position="342"/>
        <end position="387"/>
    </location>
</feature>
<feature type="compositionally biased region" description="Low complexity" evidence="2">
    <location>
        <begin position="1"/>
        <end position="13"/>
    </location>
</feature>
<feature type="compositionally biased region" description="Pro residues" evidence="2">
    <location>
        <begin position="14"/>
        <end position="31"/>
    </location>
</feature>
<feature type="compositionally biased region" description="Low complexity" evidence="2">
    <location>
        <begin position="62"/>
        <end position="74"/>
    </location>
</feature>
<feature type="compositionally biased region" description="Low complexity" evidence="2">
    <location>
        <begin position="145"/>
        <end position="158"/>
    </location>
</feature>
<feature type="compositionally biased region" description="Polar residues" evidence="2">
    <location>
        <begin position="170"/>
        <end position="181"/>
    </location>
</feature>
<feature type="compositionally biased region" description="Acidic residues" evidence="2">
    <location>
        <begin position="182"/>
        <end position="198"/>
    </location>
</feature>
<feature type="compositionally biased region" description="Gly residues" evidence="2">
    <location>
        <begin position="210"/>
        <end position="222"/>
    </location>
</feature>
<feature type="compositionally biased region" description="Low complexity" evidence="2">
    <location>
        <begin position="237"/>
        <end position="269"/>
    </location>
</feature>
<feature type="compositionally biased region" description="Gly residues" evidence="2">
    <location>
        <begin position="356"/>
        <end position="374"/>
    </location>
</feature>
<evidence type="ECO:0000255" key="1">
    <source>
        <dbReference type="PROSITE-ProRule" id="PRU00108"/>
    </source>
</evidence>
<evidence type="ECO:0000256" key="2">
    <source>
        <dbReference type="SAM" id="MobiDB-lite"/>
    </source>
</evidence>
<evidence type="ECO:0000269" key="3">
    <source>
    </source>
</evidence>
<evidence type="ECO:0000269" key="4">
    <source>
    </source>
</evidence>
<evidence type="ECO:0000269" key="5">
    <source>
    </source>
</evidence>
<evidence type="ECO:0000303" key="6">
    <source>
    </source>
</evidence>
<evidence type="ECO:0000305" key="7"/>
<evidence type="ECO:0000312" key="8">
    <source>
        <dbReference type="MGI" id="MGI:109346"/>
    </source>
</evidence>
<protein>
    <recommendedName>
        <fullName evidence="7">NK1 transcription factor-related protein 1</fullName>
    </recommendedName>
    <alternativeName>
        <fullName>Homeobox protein SAX-2</fullName>
    </alternativeName>
    <alternativeName>
        <fullName>NKX-1.1</fullName>
    </alternativeName>
</protein>
<name>NKX11_MOUSE</name>
<accession>G3UXB3</accession>
<organism>
    <name type="scientific">Mus musculus</name>
    <name type="common">Mouse</name>
    <dbReference type="NCBI Taxonomy" id="10090"/>
    <lineage>
        <taxon>Eukaryota</taxon>
        <taxon>Metazoa</taxon>
        <taxon>Chordata</taxon>
        <taxon>Craniata</taxon>
        <taxon>Vertebrata</taxon>
        <taxon>Euteleostomi</taxon>
        <taxon>Mammalia</taxon>
        <taxon>Eutheria</taxon>
        <taxon>Euarchontoglires</taxon>
        <taxon>Glires</taxon>
        <taxon>Rodentia</taxon>
        <taxon>Myomorpha</taxon>
        <taxon>Muroidea</taxon>
        <taxon>Muridae</taxon>
        <taxon>Murinae</taxon>
        <taxon>Mus</taxon>
        <taxon>Mus</taxon>
    </lineage>
</organism>
<dbReference type="EMBL" id="AC145072">
    <property type="status" value="NOT_ANNOTATED_CDS"/>
    <property type="molecule type" value="Genomic_DNA"/>
</dbReference>
<dbReference type="RefSeq" id="NP_035450.1">
    <property type="nucleotide sequence ID" value="NM_011320.1"/>
</dbReference>
<dbReference type="SMR" id="G3UXB3"/>
<dbReference type="FunCoup" id="G3UXB3">
    <property type="interactions" value="934"/>
</dbReference>
<dbReference type="STRING" id="10090.ENSMUSP00000133620"/>
<dbReference type="GlyGen" id="G3UXB3">
    <property type="glycosylation" value="1 site"/>
</dbReference>
<dbReference type="iPTMnet" id="G3UXB3"/>
<dbReference type="PhosphoSitePlus" id="G3UXB3"/>
<dbReference type="PaxDb" id="10090-ENSMUSP00000133620"/>
<dbReference type="Antibodypedia" id="22251">
    <property type="antibodies" value="79 antibodies from 11 providers"/>
</dbReference>
<dbReference type="GeneID" id="672284"/>
<dbReference type="KEGG" id="mmu:672284"/>
<dbReference type="UCSC" id="uc056zzg.1">
    <property type="organism name" value="mouse"/>
</dbReference>
<dbReference type="AGR" id="MGI:109346"/>
<dbReference type="CTD" id="54729"/>
<dbReference type="MGI" id="MGI:109346">
    <property type="gene designation" value="Nkx1-1"/>
</dbReference>
<dbReference type="VEuPathDB" id="HostDB:ENSMUSG00000029112"/>
<dbReference type="eggNOG" id="KOG0488">
    <property type="taxonomic scope" value="Eukaryota"/>
</dbReference>
<dbReference type="HOGENOM" id="CLU_063378_1_0_1"/>
<dbReference type="InParanoid" id="G3UXB3"/>
<dbReference type="OrthoDB" id="92237at9989"/>
<dbReference type="PhylomeDB" id="G3UXB3"/>
<dbReference type="TreeFam" id="TF316128"/>
<dbReference type="PRO" id="PR:G3UXB3"/>
<dbReference type="Proteomes" id="UP000000589">
    <property type="component" value="Chromosome 5"/>
</dbReference>
<dbReference type="RNAct" id="G3UXB3">
    <property type="molecule type" value="protein"/>
</dbReference>
<dbReference type="Bgee" id="ENSMUSG00000029112">
    <property type="expression patterns" value="Expressed in mesodermal cell in embryo and 4 other cell types or tissues"/>
</dbReference>
<dbReference type="GO" id="GO:0005634">
    <property type="term" value="C:nucleus"/>
    <property type="evidence" value="ECO:0007669"/>
    <property type="project" value="UniProtKB-SubCell"/>
</dbReference>
<dbReference type="GO" id="GO:0003677">
    <property type="term" value="F:DNA binding"/>
    <property type="evidence" value="ECO:0007669"/>
    <property type="project" value="UniProtKB-KW"/>
</dbReference>
<dbReference type="GO" id="GO:0000981">
    <property type="term" value="F:DNA-binding transcription factor activity, RNA polymerase II-specific"/>
    <property type="evidence" value="ECO:0007669"/>
    <property type="project" value="InterPro"/>
</dbReference>
<dbReference type="GO" id="GO:0006629">
    <property type="term" value="P:lipid metabolic process"/>
    <property type="evidence" value="ECO:0000315"/>
    <property type="project" value="MGI"/>
</dbReference>
<dbReference type="GO" id="GO:0050877">
    <property type="term" value="P:nervous system process"/>
    <property type="evidence" value="ECO:0000315"/>
    <property type="project" value="MGI"/>
</dbReference>
<dbReference type="GO" id="GO:0043467">
    <property type="term" value="P:regulation of generation of precursor metabolites and energy"/>
    <property type="evidence" value="ECO:0000315"/>
    <property type="project" value="MGI"/>
</dbReference>
<dbReference type="GO" id="GO:0010906">
    <property type="term" value="P:regulation of glucose metabolic process"/>
    <property type="evidence" value="ECO:0000315"/>
    <property type="project" value="MGI"/>
</dbReference>
<dbReference type="CDD" id="cd00086">
    <property type="entry name" value="homeodomain"/>
    <property type="match status" value="1"/>
</dbReference>
<dbReference type="FunFam" id="1.10.10.60:FF:000294">
    <property type="entry name" value="NK1 transcription factor-related protein 1"/>
    <property type="match status" value="1"/>
</dbReference>
<dbReference type="Gene3D" id="1.10.10.60">
    <property type="entry name" value="Homeodomain-like"/>
    <property type="match status" value="1"/>
</dbReference>
<dbReference type="InterPro" id="IPR001356">
    <property type="entry name" value="HD"/>
</dbReference>
<dbReference type="InterPro" id="IPR020479">
    <property type="entry name" value="HD_metazoa"/>
</dbReference>
<dbReference type="InterPro" id="IPR017970">
    <property type="entry name" value="Homeobox_CS"/>
</dbReference>
<dbReference type="InterPro" id="IPR050394">
    <property type="entry name" value="Homeobox_NK-like"/>
</dbReference>
<dbReference type="InterPro" id="IPR009057">
    <property type="entry name" value="Homeodomain-like_sf"/>
</dbReference>
<dbReference type="PANTHER" id="PTHR24340">
    <property type="entry name" value="HOMEOBOX PROTEIN NKX"/>
    <property type="match status" value="1"/>
</dbReference>
<dbReference type="PANTHER" id="PTHR24340:SF26">
    <property type="entry name" value="NK1 TRANSCRIPTION FACTOR-RELATED PROTEIN 1"/>
    <property type="match status" value="1"/>
</dbReference>
<dbReference type="Pfam" id="PF00046">
    <property type="entry name" value="Homeodomain"/>
    <property type="match status" value="1"/>
</dbReference>
<dbReference type="PRINTS" id="PR00024">
    <property type="entry name" value="HOMEOBOX"/>
</dbReference>
<dbReference type="SMART" id="SM00389">
    <property type="entry name" value="HOX"/>
    <property type="match status" value="1"/>
</dbReference>
<dbReference type="SUPFAM" id="SSF46689">
    <property type="entry name" value="Homeodomain-like"/>
    <property type="match status" value="1"/>
</dbReference>
<dbReference type="PROSITE" id="PS00027">
    <property type="entry name" value="HOMEOBOX_1"/>
    <property type="match status" value="1"/>
</dbReference>
<dbReference type="PROSITE" id="PS50071">
    <property type="entry name" value="HOMEOBOX_2"/>
    <property type="match status" value="1"/>
</dbReference>